<comment type="function">
    <text evidence="1">Major role in the synthesis of nucleoside triphosphates other than ATP. The ATP gamma phosphate is transferred to the NDP beta phosphate via a ping-pong mechanism, using a phosphorylated active-site intermediate.</text>
</comment>
<comment type="catalytic activity">
    <reaction evidence="1">
        <text>a 2'-deoxyribonucleoside 5'-diphosphate + ATP = a 2'-deoxyribonucleoside 5'-triphosphate + ADP</text>
        <dbReference type="Rhea" id="RHEA:44640"/>
        <dbReference type="ChEBI" id="CHEBI:30616"/>
        <dbReference type="ChEBI" id="CHEBI:61560"/>
        <dbReference type="ChEBI" id="CHEBI:73316"/>
        <dbReference type="ChEBI" id="CHEBI:456216"/>
        <dbReference type="EC" id="2.7.4.6"/>
    </reaction>
</comment>
<comment type="catalytic activity">
    <reaction evidence="1">
        <text>a ribonucleoside 5'-diphosphate + ATP = a ribonucleoside 5'-triphosphate + ADP</text>
        <dbReference type="Rhea" id="RHEA:18113"/>
        <dbReference type="ChEBI" id="CHEBI:30616"/>
        <dbReference type="ChEBI" id="CHEBI:57930"/>
        <dbReference type="ChEBI" id="CHEBI:61557"/>
        <dbReference type="ChEBI" id="CHEBI:456216"/>
        <dbReference type="EC" id="2.7.4.6"/>
    </reaction>
</comment>
<comment type="cofactor">
    <cofactor evidence="1">
        <name>Mg(2+)</name>
        <dbReference type="ChEBI" id="CHEBI:18420"/>
    </cofactor>
</comment>
<comment type="subunit">
    <text evidence="1">Homotetramer.</text>
</comment>
<comment type="subcellular location">
    <subcellularLocation>
        <location evidence="1">Cytoplasm</location>
    </subcellularLocation>
</comment>
<comment type="similarity">
    <text evidence="1">Belongs to the NDK family.</text>
</comment>
<sequence>MAIERTFSMIKPDATRRNLTGAIIAKLEEAGLRVVASKRVWMSRREAEGFYAVHKDRPFFGELVEFMSSGPTVVQVLEGENAIAKNREVMGATNPANADEGTIRKTFALSIGENSVHGSDAPETAAEEIAYWFSGTEIVG</sequence>
<keyword id="KW-0067">ATP-binding</keyword>
<keyword id="KW-0963">Cytoplasm</keyword>
<keyword id="KW-0418">Kinase</keyword>
<keyword id="KW-0460">Magnesium</keyword>
<keyword id="KW-0479">Metal-binding</keyword>
<keyword id="KW-0546">Nucleotide metabolism</keyword>
<keyword id="KW-0547">Nucleotide-binding</keyword>
<keyword id="KW-0597">Phosphoprotein</keyword>
<keyword id="KW-0808">Transferase</keyword>
<organism>
    <name type="scientific">Brucella melitensis biotype 2 (strain ATCC 23457)</name>
    <dbReference type="NCBI Taxonomy" id="546272"/>
    <lineage>
        <taxon>Bacteria</taxon>
        <taxon>Pseudomonadati</taxon>
        <taxon>Pseudomonadota</taxon>
        <taxon>Alphaproteobacteria</taxon>
        <taxon>Hyphomicrobiales</taxon>
        <taxon>Brucellaceae</taxon>
        <taxon>Brucella/Ochrobactrum group</taxon>
        <taxon>Brucella</taxon>
    </lineage>
</organism>
<feature type="chain" id="PRO_1000135242" description="Nucleoside diphosphate kinase">
    <location>
        <begin position="1"/>
        <end position="140"/>
    </location>
</feature>
<feature type="active site" description="Pros-phosphohistidine intermediate" evidence="1">
    <location>
        <position position="117"/>
    </location>
</feature>
<feature type="binding site" evidence="1">
    <location>
        <position position="11"/>
    </location>
    <ligand>
        <name>ATP</name>
        <dbReference type="ChEBI" id="CHEBI:30616"/>
    </ligand>
</feature>
<feature type="binding site" evidence="1">
    <location>
        <position position="59"/>
    </location>
    <ligand>
        <name>ATP</name>
        <dbReference type="ChEBI" id="CHEBI:30616"/>
    </ligand>
</feature>
<feature type="binding site" evidence="1">
    <location>
        <position position="87"/>
    </location>
    <ligand>
        <name>ATP</name>
        <dbReference type="ChEBI" id="CHEBI:30616"/>
    </ligand>
</feature>
<feature type="binding site" evidence="1">
    <location>
        <position position="93"/>
    </location>
    <ligand>
        <name>ATP</name>
        <dbReference type="ChEBI" id="CHEBI:30616"/>
    </ligand>
</feature>
<feature type="binding site" evidence="1">
    <location>
        <position position="104"/>
    </location>
    <ligand>
        <name>ATP</name>
        <dbReference type="ChEBI" id="CHEBI:30616"/>
    </ligand>
</feature>
<feature type="binding site" evidence="1">
    <location>
        <position position="114"/>
    </location>
    <ligand>
        <name>ATP</name>
        <dbReference type="ChEBI" id="CHEBI:30616"/>
    </ligand>
</feature>
<accession>C0RI35</accession>
<dbReference type="EC" id="2.7.4.6" evidence="1"/>
<dbReference type="EMBL" id="CP001488">
    <property type="protein sequence ID" value="ACO00493.1"/>
    <property type="molecule type" value="Genomic_DNA"/>
</dbReference>
<dbReference type="RefSeq" id="WP_002963836.1">
    <property type="nucleotide sequence ID" value="NC_012441.1"/>
</dbReference>
<dbReference type="SMR" id="C0RI35"/>
<dbReference type="GeneID" id="97533983"/>
<dbReference type="KEGG" id="bmi:BMEA_A0730"/>
<dbReference type="HOGENOM" id="CLU_060216_8_1_5"/>
<dbReference type="Proteomes" id="UP000001748">
    <property type="component" value="Chromosome I"/>
</dbReference>
<dbReference type="GO" id="GO:0005737">
    <property type="term" value="C:cytoplasm"/>
    <property type="evidence" value="ECO:0007669"/>
    <property type="project" value="UniProtKB-SubCell"/>
</dbReference>
<dbReference type="GO" id="GO:0005524">
    <property type="term" value="F:ATP binding"/>
    <property type="evidence" value="ECO:0007669"/>
    <property type="project" value="UniProtKB-UniRule"/>
</dbReference>
<dbReference type="GO" id="GO:0046872">
    <property type="term" value="F:metal ion binding"/>
    <property type="evidence" value="ECO:0007669"/>
    <property type="project" value="UniProtKB-KW"/>
</dbReference>
<dbReference type="GO" id="GO:0004550">
    <property type="term" value="F:nucleoside diphosphate kinase activity"/>
    <property type="evidence" value="ECO:0007669"/>
    <property type="project" value="UniProtKB-UniRule"/>
</dbReference>
<dbReference type="GO" id="GO:0006241">
    <property type="term" value="P:CTP biosynthetic process"/>
    <property type="evidence" value="ECO:0007669"/>
    <property type="project" value="UniProtKB-UniRule"/>
</dbReference>
<dbReference type="GO" id="GO:0006183">
    <property type="term" value="P:GTP biosynthetic process"/>
    <property type="evidence" value="ECO:0007669"/>
    <property type="project" value="UniProtKB-UniRule"/>
</dbReference>
<dbReference type="GO" id="GO:0006228">
    <property type="term" value="P:UTP biosynthetic process"/>
    <property type="evidence" value="ECO:0007669"/>
    <property type="project" value="UniProtKB-UniRule"/>
</dbReference>
<dbReference type="CDD" id="cd04413">
    <property type="entry name" value="NDPk_I"/>
    <property type="match status" value="1"/>
</dbReference>
<dbReference type="FunFam" id="3.30.70.141:FF:000001">
    <property type="entry name" value="Nucleoside diphosphate kinase"/>
    <property type="match status" value="1"/>
</dbReference>
<dbReference type="Gene3D" id="3.30.70.141">
    <property type="entry name" value="Nucleoside diphosphate kinase-like domain"/>
    <property type="match status" value="1"/>
</dbReference>
<dbReference type="HAMAP" id="MF_00451">
    <property type="entry name" value="NDP_kinase"/>
    <property type="match status" value="1"/>
</dbReference>
<dbReference type="InterPro" id="IPR034907">
    <property type="entry name" value="NDK-like_dom"/>
</dbReference>
<dbReference type="InterPro" id="IPR036850">
    <property type="entry name" value="NDK-like_dom_sf"/>
</dbReference>
<dbReference type="InterPro" id="IPR001564">
    <property type="entry name" value="Nucleoside_diP_kinase"/>
</dbReference>
<dbReference type="InterPro" id="IPR023005">
    <property type="entry name" value="Nucleoside_diP_kinase_AS"/>
</dbReference>
<dbReference type="NCBIfam" id="NF001908">
    <property type="entry name" value="PRK00668.1"/>
    <property type="match status" value="1"/>
</dbReference>
<dbReference type="PANTHER" id="PTHR11349">
    <property type="entry name" value="NUCLEOSIDE DIPHOSPHATE KINASE"/>
    <property type="match status" value="1"/>
</dbReference>
<dbReference type="Pfam" id="PF00334">
    <property type="entry name" value="NDK"/>
    <property type="match status" value="1"/>
</dbReference>
<dbReference type="PRINTS" id="PR01243">
    <property type="entry name" value="NUCDPKINASE"/>
</dbReference>
<dbReference type="SMART" id="SM00562">
    <property type="entry name" value="NDK"/>
    <property type="match status" value="1"/>
</dbReference>
<dbReference type="SUPFAM" id="SSF54919">
    <property type="entry name" value="Nucleoside diphosphate kinase, NDK"/>
    <property type="match status" value="1"/>
</dbReference>
<dbReference type="PROSITE" id="PS00469">
    <property type="entry name" value="NDPK"/>
    <property type="match status" value="1"/>
</dbReference>
<dbReference type="PROSITE" id="PS51374">
    <property type="entry name" value="NDPK_LIKE"/>
    <property type="match status" value="1"/>
</dbReference>
<proteinExistence type="inferred from homology"/>
<reference key="1">
    <citation type="submission" date="2009-03" db="EMBL/GenBank/DDBJ databases">
        <title>Brucella melitensis ATCC 23457 whole genome shotgun sequencing project.</title>
        <authorList>
            <person name="Setubal J.C."/>
            <person name="Boyle S."/>
            <person name="Crasta O.R."/>
            <person name="Gillespie J.J."/>
            <person name="Kenyon R.W."/>
            <person name="Lu J."/>
            <person name="Mane S."/>
            <person name="Nagrani S."/>
            <person name="Shallom J.M."/>
            <person name="Shallom S."/>
            <person name="Shukla M."/>
            <person name="Snyder E.E."/>
            <person name="Sobral B.W."/>
            <person name="Wattam A.R."/>
            <person name="Will R."/>
            <person name="Williams K."/>
            <person name="Yoo H."/>
            <person name="Munk C."/>
            <person name="Tapia R."/>
            <person name="Han C."/>
            <person name="Detter J.C."/>
            <person name="Bruce D."/>
            <person name="Brettin T.S."/>
        </authorList>
    </citation>
    <scope>NUCLEOTIDE SEQUENCE [LARGE SCALE GENOMIC DNA]</scope>
    <source>
        <strain>ATCC 23457</strain>
    </source>
</reference>
<gene>
    <name evidence="1" type="primary">ndk</name>
    <name type="ordered locus">BMEA_A0730</name>
</gene>
<evidence type="ECO:0000255" key="1">
    <source>
        <dbReference type="HAMAP-Rule" id="MF_00451"/>
    </source>
</evidence>
<protein>
    <recommendedName>
        <fullName evidence="1">Nucleoside diphosphate kinase</fullName>
        <shortName evidence="1">NDK</shortName>
        <shortName evidence="1">NDP kinase</shortName>
        <ecNumber evidence="1">2.7.4.6</ecNumber>
    </recommendedName>
    <alternativeName>
        <fullName evidence="1">Nucleoside-2-P kinase</fullName>
    </alternativeName>
</protein>
<name>NDK_BRUMB</name>